<proteinExistence type="inferred from homology"/>
<accession>Q057X9</accession>
<name>SYI_BUCCC</name>
<evidence type="ECO:0000255" key="1">
    <source>
        <dbReference type="HAMAP-Rule" id="MF_02002"/>
    </source>
</evidence>
<protein>
    <recommendedName>
        <fullName evidence="1">Isoleucine--tRNA ligase</fullName>
        <ecNumber evidence="1">6.1.1.5</ecNumber>
    </recommendedName>
    <alternativeName>
        <fullName evidence="1">Isoleucyl-tRNA synthetase</fullName>
        <shortName evidence="1">IleRS</shortName>
    </alternativeName>
</protein>
<keyword id="KW-0030">Aminoacyl-tRNA synthetase</keyword>
<keyword id="KW-0067">ATP-binding</keyword>
<keyword id="KW-0963">Cytoplasm</keyword>
<keyword id="KW-0436">Ligase</keyword>
<keyword id="KW-0479">Metal-binding</keyword>
<keyword id="KW-0547">Nucleotide-binding</keyword>
<keyword id="KW-0648">Protein biosynthesis</keyword>
<keyword id="KW-1185">Reference proteome</keyword>
<keyword id="KW-0862">Zinc</keyword>
<comment type="function">
    <text evidence="1">Catalyzes the attachment of isoleucine to tRNA(Ile). As IleRS can inadvertently accommodate and process structurally similar amino acids such as valine, to avoid such errors it has two additional distinct tRNA(Ile)-dependent editing activities. One activity is designated as 'pretransfer' editing and involves the hydrolysis of activated Val-AMP. The other activity is designated 'posttransfer' editing and involves deacylation of mischarged Val-tRNA(Ile).</text>
</comment>
<comment type="catalytic activity">
    <reaction evidence="1">
        <text>tRNA(Ile) + L-isoleucine + ATP = L-isoleucyl-tRNA(Ile) + AMP + diphosphate</text>
        <dbReference type="Rhea" id="RHEA:11060"/>
        <dbReference type="Rhea" id="RHEA-COMP:9666"/>
        <dbReference type="Rhea" id="RHEA-COMP:9695"/>
        <dbReference type="ChEBI" id="CHEBI:30616"/>
        <dbReference type="ChEBI" id="CHEBI:33019"/>
        <dbReference type="ChEBI" id="CHEBI:58045"/>
        <dbReference type="ChEBI" id="CHEBI:78442"/>
        <dbReference type="ChEBI" id="CHEBI:78528"/>
        <dbReference type="ChEBI" id="CHEBI:456215"/>
        <dbReference type="EC" id="6.1.1.5"/>
    </reaction>
</comment>
<comment type="cofactor">
    <cofactor evidence="1">
        <name>Zn(2+)</name>
        <dbReference type="ChEBI" id="CHEBI:29105"/>
    </cofactor>
    <text evidence="1">Binds 1 zinc ion per subunit.</text>
</comment>
<comment type="subunit">
    <text evidence="1">Monomer.</text>
</comment>
<comment type="subcellular location">
    <subcellularLocation>
        <location evidence="1">Cytoplasm</location>
    </subcellularLocation>
</comment>
<comment type="domain">
    <text evidence="1">IleRS has two distinct active sites: one for aminoacylation and one for editing. The misactivated valine is translocated from the active site to the editing site, which sterically excludes the correctly activated isoleucine. The single editing site contains two valyl binding pockets, one specific for each substrate (Val-AMP or Val-tRNA(Ile)).</text>
</comment>
<comment type="similarity">
    <text evidence="1">Belongs to the class-I aminoacyl-tRNA synthetase family. IleS type 1 subfamily.</text>
</comment>
<sequence length="941" mass="112919">MINIKKSLNLPKTKFPMKANLAYKENEILETWKKINLYNKLHKNKKKNKQFFLQDGPPYANGNIHIGHAVNKILKDIILKFKRMSGFFSPYIPCWDCHGLPIEHIIEKKLSKKKINKKEFRKICFKYVLKQVEKQKNDFIRLGIIANWDNINLSTDYINQSNTIKVLTKIVEKGLIYRDLKPVYWCFDCQSALAEAEIEYKFKKSISIYIEYKLIENSILKNNFFKNYNKKIFNNISILIFTTTPWTIPTCQAIAINPKLYYQIIKINKKYYICIEELTKKIFKKNNIKKWKIILSFKGKEIEHIKCFHPFLNTQIPIILSKHVSNQLGTGAVHMSPDHGYEDFIACKKYKIIPKQIVDSHGFYKIKKYSQLNNIHIFNKENKIIYILKKNKKLFFFQTINHNYPHCWRHKKPIIFRATPQWFINLSKKNFKEDTFNKIKKILWIPSWGKNKMKKMLKIRPDWCISRQRIWGIPLPFFIHKNTGELHPNTVMIMKKIVKKIRNHGYKIWWESNVNTWIKKDSETYRKVNDVLDVWFESGANHQLKIYKHNIKNKKNYVADLYLEGSDQHRGWFMSSLIISMITKTIPPYLSVITHGFVLDKNGQKMSKSLNNNISPKKIIQKKGADILRLWVAYTNYTNDISISNEILEQISDNYRRIRNTIRFLFSNIFDFKANIHIIKYEKMLFLDQWIIEKTYNYQRKIIKKYSQYQFHKVIKKIINFCSIELGSCYLELIKDRQYTMHKNSIERRSSQTAIFYILQFLVRWIAPILSFTAEEIWSQLQEKKEKSIFMTQWYKNKQLIKKKSTYNLFFWKKIFAIRKEINLFIETEKKNKFIKNSLEIILLLYINKKLFNFLLLFNNELKFIFLVSETQLHKYSSAPSLAIKSKKIKKFKILIKKSKKIKCPRCWNYTKKNNFLKNKNSICNKCIKNINQTNKKHIFL</sequence>
<dbReference type="EC" id="6.1.1.5" evidence="1"/>
<dbReference type="EMBL" id="CP000263">
    <property type="protein sequence ID" value="ABJ90570.1"/>
    <property type="molecule type" value="Genomic_DNA"/>
</dbReference>
<dbReference type="RefSeq" id="WP_011672489.1">
    <property type="nucleotide sequence ID" value="NC_008513.1"/>
</dbReference>
<dbReference type="SMR" id="Q057X9"/>
<dbReference type="STRING" id="372461.BCc_093"/>
<dbReference type="KEGG" id="bcc:BCc_093"/>
<dbReference type="eggNOG" id="COG0060">
    <property type="taxonomic scope" value="Bacteria"/>
</dbReference>
<dbReference type="HOGENOM" id="CLU_001493_7_0_6"/>
<dbReference type="OrthoDB" id="9810365at2"/>
<dbReference type="Proteomes" id="UP000000669">
    <property type="component" value="Chromosome"/>
</dbReference>
<dbReference type="GO" id="GO:0005829">
    <property type="term" value="C:cytosol"/>
    <property type="evidence" value="ECO:0007669"/>
    <property type="project" value="TreeGrafter"/>
</dbReference>
<dbReference type="GO" id="GO:0002161">
    <property type="term" value="F:aminoacyl-tRNA deacylase activity"/>
    <property type="evidence" value="ECO:0007669"/>
    <property type="project" value="InterPro"/>
</dbReference>
<dbReference type="GO" id="GO:0005524">
    <property type="term" value="F:ATP binding"/>
    <property type="evidence" value="ECO:0007669"/>
    <property type="project" value="UniProtKB-UniRule"/>
</dbReference>
<dbReference type="GO" id="GO:0004822">
    <property type="term" value="F:isoleucine-tRNA ligase activity"/>
    <property type="evidence" value="ECO:0007669"/>
    <property type="project" value="UniProtKB-UniRule"/>
</dbReference>
<dbReference type="GO" id="GO:0000049">
    <property type="term" value="F:tRNA binding"/>
    <property type="evidence" value="ECO:0007669"/>
    <property type="project" value="InterPro"/>
</dbReference>
<dbReference type="GO" id="GO:0008270">
    <property type="term" value="F:zinc ion binding"/>
    <property type="evidence" value="ECO:0007669"/>
    <property type="project" value="UniProtKB-UniRule"/>
</dbReference>
<dbReference type="GO" id="GO:0006428">
    <property type="term" value="P:isoleucyl-tRNA aminoacylation"/>
    <property type="evidence" value="ECO:0007669"/>
    <property type="project" value="UniProtKB-UniRule"/>
</dbReference>
<dbReference type="CDD" id="cd07960">
    <property type="entry name" value="Anticodon_Ia_Ile_BEm"/>
    <property type="match status" value="1"/>
</dbReference>
<dbReference type="Gene3D" id="1.10.730.20">
    <property type="match status" value="1"/>
</dbReference>
<dbReference type="Gene3D" id="3.40.50.620">
    <property type="entry name" value="HUPs"/>
    <property type="match status" value="2"/>
</dbReference>
<dbReference type="HAMAP" id="MF_02002">
    <property type="entry name" value="Ile_tRNA_synth_type1"/>
    <property type="match status" value="1"/>
</dbReference>
<dbReference type="InterPro" id="IPR001412">
    <property type="entry name" value="aa-tRNA-synth_I_CS"/>
</dbReference>
<dbReference type="InterPro" id="IPR002300">
    <property type="entry name" value="aa-tRNA-synth_Ia"/>
</dbReference>
<dbReference type="InterPro" id="IPR033708">
    <property type="entry name" value="Anticodon_Ile_BEm"/>
</dbReference>
<dbReference type="InterPro" id="IPR002301">
    <property type="entry name" value="Ile-tRNA-ligase"/>
</dbReference>
<dbReference type="InterPro" id="IPR023585">
    <property type="entry name" value="Ile-tRNA-ligase_type1"/>
</dbReference>
<dbReference type="InterPro" id="IPR050081">
    <property type="entry name" value="Ile-tRNA_ligase"/>
</dbReference>
<dbReference type="InterPro" id="IPR013155">
    <property type="entry name" value="M/V/L/I-tRNA-synth_anticd-bd"/>
</dbReference>
<dbReference type="InterPro" id="IPR014729">
    <property type="entry name" value="Rossmann-like_a/b/a_fold"/>
</dbReference>
<dbReference type="InterPro" id="IPR009080">
    <property type="entry name" value="tRNAsynth_Ia_anticodon-bd"/>
</dbReference>
<dbReference type="InterPro" id="IPR009008">
    <property type="entry name" value="Val/Leu/Ile-tRNA-synth_edit"/>
</dbReference>
<dbReference type="InterPro" id="IPR010663">
    <property type="entry name" value="Znf_FPG/IleRS"/>
</dbReference>
<dbReference type="NCBIfam" id="TIGR00392">
    <property type="entry name" value="ileS"/>
    <property type="match status" value="1"/>
</dbReference>
<dbReference type="PANTHER" id="PTHR42765:SF1">
    <property type="entry name" value="ISOLEUCINE--TRNA LIGASE, MITOCHONDRIAL"/>
    <property type="match status" value="1"/>
</dbReference>
<dbReference type="PANTHER" id="PTHR42765">
    <property type="entry name" value="SOLEUCYL-TRNA SYNTHETASE"/>
    <property type="match status" value="1"/>
</dbReference>
<dbReference type="Pfam" id="PF08264">
    <property type="entry name" value="Anticodon_1"/>
    <property type="match status" value="1"/>
</dbReference>
<dbReference type="Pfam" id="PF00133">
    <property type="entry name" value="tRNA-synt_1"/>
    <property type="match status" value="1"/>
</dbReference>
<dbReference type="Pfam" id="PF06827">
    <property type="entry name" value="zf-FPG_IleRS"/>
    <property type="match status" value="1"/>
</dbReference>
<dbReference type="PRINTS" id="PR00984">
    <property type="entry name" value="TRNASYNTHILE"/>
</dbReference>
<dbReference type="SUPFAM" id="SSF47323">
    <property type="entry name" value="Anticodon-binding domain of a subclass of class I aminoacyl-tRNA synthetases"/>
    <property type="match status" value="1"/>
</dbReference>
<dbReference type="SUPFAM" id="SSF52374">
    <property type="entry name" value="Nucleotidylyl transferase"/>
    <property type="match status" value="1"/>
</dbReference>
<dbReference type="SUPFAM" id="SSF50677">
    <property type="entry name" value="ValRS/IleRS/LeuRS editing domain"/>
    <property type="match status" value="1"/>
</dbReference>
<dbReference type="PROSITE" id="PS00178">
    <property type="entry name" value="AA_TRNA_LIGASE_I"/>
    <property type="match status" value="1"/>
</dbReference>
<organism>
    <name type="scientific">Buchnera aphidicola subsp. Cinara cedri (strain Cc)</name>
    <dbReference type="NCBI Taxonomy" id="372461"/>
    <lineage>
        <taxon>Bacteria</taxon>
        <taxon>Pseudomonadati</taxon>
        <taxon>Pseudomonadota</taxon>
        <taxon>Gammaproteobacteria</taxon>
        <taxon>Enterobacterales</taxon>
        <taxon>Erwiniaceae</taxon>
        <taxon>Buchnera</taxon>
    </lineage>
</organism>
<gene>
    <name evidence="1" type="primary">ileS</name>
    <name type="ordered locus">BCc_093</name>
</gene>
<reference key="1">
    <citation type="journal article" date="2006" name="Science">
        <title>A small microbial genome: the end of a long symbiotic relationship?</title>
        <authorList>
            <person name="Perez-Brocal V."/>
            <person name="Gil R."/>
            <person name="Ramos S."/>
            <person name="Lamelas A."/>
            <person name="Postigo M."/>
            <person name="Michelena J.M."/>
            <person name="Silva F.J."/>
            <person name="Moya A."/>
            <person name="Latorre A."/>
        </authorList>
    </citation>
    <scope>NUCLEOTIDE SEQUENCE [LARGE SCALE GENOMIC DNA]</scope>
    <source>
        <strain>Cc</strain>
    </source>
</reference>
<feature type="chain" id="PRO_1000022044" description="Isoleucine--tRNA ligase">
    <location>
        <begin position="1"/>
        <end position="941"/>
    </location>
</feature>
<feature type="short sequence motif" description="'HIGH' region">
    <location>
        <begin position="58"/>
        <end position="68"/>
    </location>
</feature>
<feature type="short sequence motif" description="'KMSKS' region">
    <location>
        <begin position="605"/>
        <end position="609"/>
    </location>
</feature>
<feature type="binding site" evidence="1">
    <location>
        <position position="564"/>
    </location>
    <ligand>
        <name>L-isoleucyl-5'-AMP</name>
        <dbReference type="ChEBI" id="CHEBI:178002"/>
    </ligand>
</feature>
<feature type="binding site" evidence="1">
    <location>
        <position position="608"/>
    </location>
    <ligand>
        <name>ATP</name>
        <dbReference type="ChEBI" id="CHEBI:30616"/>
    </ligand>
</feature>
<feature type="binding site" evidence="1">
    <location>
        <position position="904"/>
    </location>
    <ligand>
        <name>Zn(2+)</name>
        <dbReference type="ChEBI" id="CHEBI:29105"/>
    </ligand>
</feature>
<feature type="binding site" evidence="1">
    <location>
        <position position="907"/>
    </location>
    <ligand>
        <name>Zn(2+)</name>
        <dbReference type="ChEBI" id="CHEBI:29105"/>
    </ligand>
</feature>
<feature type="binding site" evidence="1">
    <location>
        <position position="924"/>
    </location>
    <ligand>
        <name>Zn(2+)</name>
        <dbReference type="ChEBI" id="CHEBI:29105"/>
    </ligand>
</feature>
<feature type="binding site" evidence="1">
    <location>
        <position position="927"/>
    </location>
    <ligand>
        <name>Zn(2+)</name>
        <dbReference type="ChEBI" id="CHEBI:29105"/>
    </ligand>
</feature>